<accession>Q6G1W4</accession>
<gene>
    <name evidence="1" type="primary">tal</name>
    <name type="ordered locus">BH15370</name>
</gene>
<reference key="1">
    <citation type="journal article" date="2004" name="Proc. Natl. Acad. Sci. U.S.A.">
        <title>The louse-borne human pathogen Bartonella quintana is a genomic derivative of the zoonotic agent Bartonella henselae.</title>
        <authorList>
            <person name="Alsmark U.C.M."/>
            <person name="Frank A.C."/>
            <person name="Karlberg E.O."/>
            <person name="Legault B.-A."/>
            <person name="Ardell D.H."/>
            <person name="Canbaeck B."/>
            <person name="Eriksson A.-S."/>
            <person name="Naeslund A.K."/>
            <person name="Handley S.A."/>
            <person name="Huvet M."/>
            <person name="La Scola B."/>
            <person name="Holmberg M."/>
            <person name="Andersson S.G.E."/>
        </authorList>
    </citation>
    <scope>NUCLEOTIDE SEQUENCE [LARGE SCALE GENOMIC DNA]</scope>
    <source>
        <strain>ATCC 49882 / DSM 28221 / CCUG 30454 / Houston 1</strain>
    </source>
</reference>
<proteinExistence type="inferred from homology"/>
<feature type="chain" id="PRO_1000126281" description="Probable transaldolase">
    <location>
        <begin position="1"/>
        <end position="218"/>
    </location>
</feature>
<feature type="active site" description="Schiff-base intermediate with substrate" evidence="1">
    <location>
        <position position="84"/>
    </location>
</feature>
<protein>
    <recommendedName>
        <fullName evidence="1">Probable transaldolase</fullName>
        <ecNumber evidence="1">2.2.1.2</ecNumber>
    </recommendedName>
</protein>
<keyword id="KW-0963">Cytoplasm</keyword>
<keyword id="KW-0570">Pentose shunt</keyword>
<keyword id="KW-0704">Schiff base</keyword>
<keyword id="KW-0808">Transferase</keyword>
<dbReference type="EC" id="2.2.1.2" evidence="1"/>
<dbReference type="EMBL" id="BX897699">
    <property type="protein sequence ID" value="CAF28300.1"/>
    <property type="molecule type" value="Genomic_DNA"/>
</dbReference>
<dbReference type="SMR" id="Q6G1W4"/>
<dbReference type="PaxDb" id="283166-BH15370"/>
<dbReference type="EnsemblBacteria" id="CAF28300">
    <property type="protein sequence ID" value="CAF28300"/>
    <property type="gene ID" value="BH15370"/>
</dbReference>
<dbReference type="KEGG" id="bhe:BH15370"/>
<dbReference type="eggNOG" id="COG0176">
    <property type="taxonomic scope" value="Bacteria"/>
</dbReference>
<dbReference type="OrthoDB" id="9807051at2"/>
<dbReference type="UniPathway" id="UPA00115">
    <property type="reaction ID" value="UER00414"/>
</dbReference>
<dbReference type="Proteomes" id="UP000000421">
    <property type="component" value="Chromosome"/>
</dbReference>
<dbReference type="GO" id="GO:0005737">
    <property type="term" value="C:cytoplasm"/>
    <property type="evidence" value="ECO:0007669"/>
    <property type="project" value="UniProtKB-SubCell"/>
</dbReference>
<dbReference type="GO" id="GO:0016832">
    <property type="term" value="F:aldehyde-lyase activity"/>
    <property type="evidence" value="ECO:0007669"/>
    <property type="project" value="InterPro"/>
</dbReference>
<dbReference type="GO" id="GO:0004801">
    <property type="term" value="F:transaldolase activity"/>
    <property type="evidence" value="ECO:0007669"/>
    <property type="project" value="UniProtKB-UniRule"/>
</dbReference>
<dbReference type="GO" id="GO:0005975">
    <property type="term" value="P:carbohydrate metabolic process"/>
    <property type="evidence" value="ECO:0007669"/>
    <property type="project" value="InterPro"/>
</dbReference>
<dbReference type="GO" id="GO:0006098">
    <property type="term" value="P:pentose-phosphate shunt"/>
    <property type="evidence" value="ECO:0007669"/>
    <property type="project" value="UniProtKB-UniRule"/>
</dbReference>
<dbReference type="CDD" id="cd00956">
    <property type="entry name" value="Transaldolase_FSA"/>
    <property type="match status" value="1"/>
</dbReference>
<dbReference type="FunFam" id="3.20.20.70:FF:000018">
    <property type="entry name" value="Probable transaldolase"/>
    <property type="match status" value="1"/>
</dbReference>
<dbReference type="Gene3D" id="3.20.20.70">
    <property type="entry name" value="Aldolase class I"/>
    <property type="match status" value="1"/>
</dbReference>
<dbReference type="HAMAP" id="MF_00494">
    <property type="entry name" value="Transaldolase_3b"/>
    <property type="match status" value="1"/>
</dbReference>
<dbReference type="InterPro" id="IPR013785">
    <property type="entry name" value="Aldolase_TIM"/>
</dbReference>
<dbReference type="InterPro" id="IPR001585">
    <property type="entry name" value="TAL/FSA"/>
</dbReference>
<dbReference type="InterPro" id="IPR022999">
    <property type="entry name" value="Transaldolase_3B"/>
</dbReference>
<dbReference type="InterPro" id="IPR004731">
    <property type="entry name" value="Transaldolase_3B/F6P_aldolase"/>
</dbReference>
<dbReference type="InterPro" id="IPR018225">
    <property type="entry name" value="Transaldolase_AS"/>
</dbReference>
<dbReference type="InterPro" id="IPR033919">
    <property type="entry name" value="TSA/FSA_arc/bac"/>
</dbReference>
<dbReference type="NCBIfam" id="TIGR00875">
    <property type="entry name" value="fsa_talC_mipB"/>
    <property type="match status" value="1"/>
</dbReference>
<dbReference type="PANTHER" id="PTHR10683:SF40">
    <property type="entry name" value="FRUCTOSE-6-PHOSPHATE ALDOLASE 1-RELATED"/>
    <property type="match status" value="1"/>
</dbReference>
<dbReference type="PANTHER" id="PTHR10683">
    <property type="entry name" value="TRANSALDOLASE"/>
    <property type="match status" value="1"/>
</dbReference>
<dbReference type="Pfam" id="PF00923">
    <property type="entry name" value="TAL_FSA"/>
    <property type="match status" value="1"/>
</dbReference>
<dbReference type="SUPFAM" id="SSF51569">
    <property type="entry name" value="Aldolase"/>
    <property type="match status" value="1"/>
</dbReference>
<dbReference type="PROSITE" id="PS01054">
    <property type="entry name" value="TRANSALDOLASE_1"/>
    <property type="match status" value="1"/>
</dbReference>
<dbReference type="PROSITE" id="PS00958">
    <property type="entry name" value="TRANSALDOLASE_2"/>
    <property type="match status" value="1"/>
</dbReference>
<evidence type="ECO:0000255" key="1">
    <source>
        <dbReference type="HAMAP-Rule" id="MF_00494"/>
    </source>
</evidence>
<sequence>MKFFVDSANIEEIQELQNLNLVDGVTTNPSLILKSGRNILEVTKEICTLVVHGPVSAEVAATEFEDIMKEAAVLANIADNICIKLPLTFDGLKACKALTAQGLKTNLTLCFSANQALLAAKAGATFISPFVGRLDDYGINGSDLLHEIRTIYNNYSFETQILAASIRTINHVKEAALSGADVATIPPTILKALIKHPLTEKGLQSFLEDWKKTGQNIA</sequence>
<organism>
    <name type="scientific">Bartonella henselae (strain ATCC 49882 / DSM 28221 / CCUG 30454 / Houston 1)</name>
    <name type="common">Rochalimaea henselae</name>
    <dbReference type="NCBI Taxonomy" id="283166"/>
    <lineage>
        <taxon>Bacteria</taxon>
        <taxon>Pseudomonadati</taxon>
        <taxon>Pseudomonadota</taxon>
        <taxon>Alphaproteobacteria</taxon>
        <taxon>Hyphomicrobiales</taxon>
        <taxon>Bartonellaceae</taxon>
        <taxon>Bartonella</taxon>
    </lineage>
</organism>
<name>TAL_BARHE</name>
<comment type="function">
    <text evidence="1">Transaldolase is important for the balance of metabolites in the pentose-phosphate pathway.</text>
</comment>
<comment type="catalytic activity">
    <reaction evidence="1">
        <text>D-sedoheptulose 7-phosphate + D-glyceraldehyde 3-phosphate = D-erythrose 4-phosphate + beta-D-fructose 6-phosphate</text>
        <dbReference type="Rhea" id="RHEA:17053"/>
        <dbReference type="ChEBI" id="CHEBI:16897"/>
        <dbReference type="ChEBI" id="CHEBI:57483"/>
        <dbReference type="ChEBI" id="CHEBI:57634"/>
        <dbReference type="ChEBI" id="CHEBI:59776"/>
        <dbReference type="EC" id="2.2.1.2"/>
    </reaction>
</comment>
<comment type="pathway">
    <text evidence="1">Carbohydrate degradation; pentose phosphate pathway; D-glyceraldehyde 3-phosphate and beta-D-fructose 6-phosphate from D-ribose 5-phosphate and D-xylulose 5-phosphate (non-oxidative stage): step 2/3.</text>
</comment>
<comment type="subcellular location">
    <subcellularLocation>
        <location evidence="1">Cytoplasm</location>
    </subcellularLocation>
</comment>
<comment type="similarity">
    <text evidence="1">Belongs to the transaldolase family. Type 3B subfamily.</text>
</comment>